<accession>B2GDW5</accession>
<feature type="chain" id="PRO_1000127993" description="Small ribosomal subunit protein uS19">
    <location>
        <begin position="1"/>
        <end position="93"/>
    </location>
</feature>
<proteinExistence type="inferred from homology"/>
<sequence>MGRSLKKGPFADASLLKKVEAQADSDKKTVIKTWSRRSTIFPSFIGYTFAVYDGRKHVPVYVQEDMVGHKLGEFVPTRTFRGHAADDKKTGRK</sequence>
<keyword id="KW-1185">Reference proteome</keyword>
<keyword id="KW-0687">Ribonucleoprotein</keyword>
<keyword id="KW-0689">Ribosomal protein</keyword>
<keyword id="KW-0694">RNA-binding</keyword>
<keyword id="KW-0699">rRNA-binding</keyword>
<evidence type="ECO:0000255" key="1">
    <source>
        <dbReference type="HAMAP-Rule" id="MF_00531"/>
    </source>
</evidence>
<evidence type="ECO:0000305" key="2"/>
<organism>
    <name type="scientific">Limosilactobacillus fermentum (strain NBRC 3956 / LMG 18251)</name>
    <name type="common">Lactobacillus fermentum</name>
    <dbReference type="NCBI Taxonomy" id="334390"/>
    <lineage>
        <taxon>Bacteria</taxon>
        <taxon>Bacillati</taxon>
        <taxon>Bacillota</taxon>
        <taxon>Bacilli</taxon>
        <taxon>Lactobacillales</taxon>
        <taxon>Lactobacillaceae</taxon>
        <taxon>Limosilactobacillus</taxon>
    </lineage>
</organism>
<comment type="function">
    <text evidence="1">Protein S19 forms a complex with S13 that binds strongly to the 16S ribosomal RNA.</text>
</comment>
<comment type="similarity">
    <text evidence="1">Belongs to the universal ribosomal protein uS19 family.</text>
</comment>
<gene>
    <name evidence="1" type="primary">rpsS</name>
    <name type="ordered locus">LAF_1511</name>
</gene>
<dbReference type="EMBL" id="AP008937">
    <property type="protein sequence ID" value="BAG27847.1"/>
    <property type="molecule type" value="Genomic_DNA"/>
</dbReference>
<dbReference type="RefSeq" id="WP_003681578.1">
    <property type="nucleotide sequence ID" value="NC_010610.1"/>
</dbReference>
<dbReference type="SMR" id="B2GDW5"/>
<dbReference type="GeneID" id="83716112"/>
<dbReference type="KEGG" id="lfe:LAF_1511"/>
<dbReference type="eggNOG" id="COG0185">
    <property type="taxonomic scope" value="Bacteria"/>
</dbReference>
<dbReference type="HOGENOM" id="CLU_144911_0_1_9"/>
<dbReference type="Proteomes" id="UP000001697">
    <property type="component" value="Chromosome"/>
</dbReference>
<dbReference type="GO" id="GO:0005737">
    <property type="term" value="C:cytoplasm"/>
    <property type="evidence" value="ECO:0007669"/>
    <property type="project" value="UniProtKB-ARBA"/>
</dbReference>
<dbReference type="GO" id="GO:0015935">
    <property type="term" value="C:small ribosomal subunit"/>
    <property type="evidence" value="ECO:0007669"/>
    <property type="project" value="InterPro"/>
</dbReference>
<dbReference type="GO" id="GO:0019843">
    <property type="term" value="F:rRNA binding"/>
    <property type="evidence" value="ECO:0007669"/>
    <property type="project" value="UniProtKB-UniRule"/>
</dbReference>
<dbReference type="GO" id="GO:0003735">
    <property type="term" value="F:structural constituent of ribosome"/>
    <property type="evidence" value="ECO:0007669"/>
    <property type="project" value="InterPro"/>
</dbReference>
<dbReference type="GO" id="GO:0000028">
    <property type="term" value="P:ribosomal small subunit assembly"/>
    <property type="evidence" value="ECO:0007669"/>
    <property type="project" value="TreeGrafter"/>
</dbReference>
<dbReference type="GO" id="GO:0006412">
    <property type="term" value="P:translation"/>
    <property type="evidence" value="ECO:0007669"/>
    <property type="project" value="UniProtKB-UniRule"/>
</dbReference>
<dbReference type="FunFam" id="3.30.860.10:FF:000001">
    <property type="entry name" value="30S ribosomal protein S19"/>
    <property type="match status" value="1"/>
</dbReference>
<dbReference type="Gene3D" id="3.30.860.10">
    <property type="entry name" value="30s Ribosomal Protein S19, Chain A"/>
    <property type="match status" value="1"/>
</dbReference>
<dbReference type="HAMAP" id="MF_00531">
    <property type="entry name" value="Ribosomal_uS19"/>
    <property type="match status" value="1"/>
</dbReference>
<dbReference type="InterPro" id="IPR002222">
    <property type="entry name" value="Ribosomal_uS19"/>
</dbReference>
<dbReference type="InterPro" id="IPR005732">
    <property type="entry name" value="Ribosomal_uS19_bac-type"/>
</dbReference>
<dbReference type="InterPro" id="IPR020934">
    <property type="entry name" value="Ribosomal_uS19_CS"/>
</dbReference>
<dbReference type="InterPro" id="IPR023575">
    <property type="entry name" value="Ribosomal_uS19_SF"/>
</dbReference>
<dbReference type="NCBIfam" id="TIGR01050">
    <property type="entry name" value="rpsS_bact"/>
    <property type="match status" value="1"/>
</dbReference>
<dbReference type="PANTHER" id="PTHR11880">
    <property type="entry name" value="RIBOSOMAL PROTEIN S19P FAMILY MEMBER"/>
    <property type="match status" value="1"/>
</dbReference>
<dbReference type="PANTHER" id="PTHR11880:SF8">
    <property type="entry name" value="SMALL RIBOSOMAL SUBUNIT PROTEIN US19M"/>
    <property type="match status" value="1"/>
</dbReference>
<dbReference type="Pfam" id="PF00203">
    <property type="entry name" value="Ribosomal_S19"/>
    <property type="match status" value="1"/>
</dbReference>
<dbReference type="PIRSF" id="PIRSF002144">
    <property type="entry name" value="Ribosomal_S19"/>
    <property type="match status" value="1"/>
</dbReference>
<dbReference type="PRINTS" id="PR00975">
    <property type="entry name" value="RIBOSOMALS19"/>
</dbReference>
<dbReference type="SUPFAM" id="SSF54570">
    <property type="entry name" value="Ribosomal protein S19"/>
    <property type="match status" value="1"/>
</dbReference>
<dbReference type="PROSITE" id="PS00323">
    <property type="entry name" value="RIBOSOMAL_S19"/>
    <property type="match status" value="1"/>
</dbReference>
<protein>
    <recommendedName>
        <fullName evidence="1">Small ribosomal subunit protein uS19</fullName>
    </recommendedName>
    <alternativeName>
        <fullName evidence="2">30S ribosomal protein S19</fullName>
    </alternativeName>
</protein>
<name>RS19_LIMF3</name>
<reference key="1">
    <citation type="journal article" date="2008" name="DNA Res.">
        <title>Comparative genome analysis of Lactobacillus reuteri and Lactobacillus fermentum reveal a genomic island for reuterin and cobalamin production.</title>
        <authorList>
            <person name="Morita H."/>
            <person name="Toh H."/>
            <person name="Fukuda S."/>
            <person name="Horikawa H."/>
            <person name="Oshima K."/>
            <person name="Suzuki T."/>
            <person name="Murakami M."/>
            <person name="Hisamatsu S."/>
            <person name="Kato Y."/>
            <person name="Takizawa T."/>
            <person name="Fukuoka H."/>
            <person name="Yoshimura T."/>
            <person name="Itoh K."/>
            <person name="O'Sullivan D.J."/>
            <person name="McKay L.L."/>
            <person name="Ohno H."/>
            <person name="Kikuchi J."/>
            <person name="Masaoka T."/>
            <person name="Hattori M."/>
        </authorList>
    </citation>
    <scope>NUCLEOTIDE SEQUENCE [LARGE SCALE GENOMIC DNA]</scope>
    <source>
        <strain>NBRC 3956 / LMG 18251</strain>
    </source>
</reference>